<gene>
    <name type="primary">pgk</name>
</gene>
<comment type="catalytic activity">
    <reaction>
        <text>(2R)-3-phosphoglycerate + ATP = (2R)-3-phospho-glyceroyl phosphate + ADP</text>
        <dbReference type="Rhea" id="RHEA:14801"/>
        <dbReference type="ChEBI" id="CHEBI:30616"/>
        <dbReference type="ChEBI" id="CHEBI:57604"/>
        <dbReference type="ChEBI" id="CHEBI:58272"/>
        <dbReference type="ChEBI" id="CHEBI:456216"/>
        <dbReference type="EC" id="2.7.2.3"/>
    </reaction>
</comment>
<comment type="pathway">
    <text>Carbohydrate degradation; glycolysis; pyruvate from D-glyceraldehyde 3-phosphate: step 2/5.</text>
</comment>
<comment type="subunit">
    <text evidence="1">Monomer.</text>
</comment>
<comment type="subcellular location">
    <subcellularLocation>
        <location>Cytoplasm</location>
    </subcellularLocation>
</comment>
<comment type="miscellaneous">
    <text>On the 2D-gel the determined pI of this protein is: 5.6, its MW is: 56.2 kDa.</text>
</comment>
<comment type="similarity">
    <text evidence="2">Belongs to the phosphoglycerate kinase family.</text>
</comment>
<name>PGK_CLOPA</name>
<evidence type="ECO:0000250" key="1"/>
<evidence type="ECO:0000305" key="2"/>
<proteinExistence type="evidence at protein level"/>
<accession>P81346</accession>
<protein>
    <recommendedName>
        <fullName>Putative phosphoglycerate kinase</fullName>
        <ecNumber>2.7.2.3</ecNumber>
    </recommendedName>
    <alternativeName>
        <fullName>CP 11</fullName>
    </alternativeName>
</protein>
<organism>
    <name type="scientific">Clostridium pasteurianum</name>
    <dbReference type="NCBI Taxonomy" id="1501"/>
    <lineage>
        <taxon>Bacteria</taxon>
        <taxon>Bacillati</taxon>
        <taxon>Bacillota</taxon>
        <taxon>Clostridia</taxon>
        <taxon>Eubacteriales</taxon>
        <taxon>Clostridiaceae</taxon>
        <taxon>Clostridium</taxon>
    </lineage>
</organism>
<keyword id="KW-0067">ATP-binding</keyword>
<keyword id="KW-0963">Cytoplasm</keyword>
<keyword id="KW-0903">Direct protein sequencing</keyword>
<keyword id="KW-0324">Glycolysis</keyword>
<keyword id="KW-0418">Kinase</keyword>
<keyword id="KW-0547">Nucleotide-binding</keyword>
<keyword id="KW-0808">Transferase</keyword>
<feature type="chain" id="PRO_0000145932" description="Putative phosphoglycerate kinase">
    <location>
        <begin position="1"/>
        <end position="20" status="greater than"/>
    </location>
</feature>
<feature type="non-terminal residue">
    <location>
        <position position="20"/>
    </location>
</feature>
<dbReference type="EC" id="2.7.2.3"/>
<dbReference type="UniPathway" id="UPA00109">
    <property type="reaction ID" value="UER00185"/>
</dbReference>
<dbReference type="GO" id="GO:0005737">
    <property type="term" value="C:cytoplasm"/>
    <property type="evidence" value="ECO:0007669"/>
    <property type="project" value="UniProtKB-SubCell"/>
</dbReference>
<dbReference type="GO" id="GO:0005524">
    <property type="term" value="F:ATP binding"/>
    <property type="evidence" value="ECO:0007669"/>
    <property type="project" value="UniProtKB-KW"/>
</dbReference>
<dbReference type="GO" id="GO:0004618">
    <property type="term" value="F:phosphoglycerate kinase activity"/>
    <property type="evidence" value="ECO:0007669"/>
    <property type="project" value="UniProtKB-EC"/>
</dbReference>
<dbReference type="GO" id="GO:0006096">
    <property type="term" value="P:glycolytic process"/>
    <property type="evidence" value="ECO:0007669"/>
    <property type="project" value="UniProtKB-UniPathway"/>
</dbReference>
<sequence length="20" mass="2356">XYNLLTIEDIDVKGKRVLVR</sequence>
<reference key="1">
    <citation type="journal article" date="1998" name="Electrophoresis">
        <title>Two-dimensional gel electrophoresis separation and N-terminal sequence analysis of proteins from Clostridium pasteurianum W5.</title>
        <authorList>
            <person name="Flengsrud R."/>
            <person name="Skjeldal L."/>
        </authorList>
    </citation>
    <scope>PROTEIN SEQUENCE</scope>
    <source>
        <strain>ATCC 6013 / DSM 525 / NCIB 9486 / VKM B-1774 / W5</strain>
    </source>
</reference>